<evidence type="ECO:0000255" key="1">
    <source>
        <dbReference type="HAMAP-Rule" id="MF_00451"/>
    </source>
</evidence>
<organism>
    <name type="scientific">Thermosynechococcus vestitus (strain NIES-2133 / IAM M-273 / BP-1)</name>
    <dbReference type="NCBI Taxonomy" id="197221"/>
    <lineage>
        <taxon>Bacteria</taxon>
        <taxon>Bacillati</taxon>
        <taxon>Cyanobacteriota</taxon>
        <taxon>Cyanophyceae</taxon>
        <taxon>Acaryochloridales</taxon>
        <taxon>Thermosynechococcaceae</taxon>
        <taxon>Thermosynechococcus</taxon>
    </lineage>
</organism>
<gene>
    <name evidence="1" type="primary">ndk</name>
    <name type="ordered locus">tlr0267</name>
</gene>
<sequence>MERTFLAIKPDGVQRGLVGTIIQRFEQKGYTLVGLKLMRVSRELAEQHYGEHKDKPFFPGLVNFITSGPVVAMVWEGRGVIANARKLIGATNPLNAEPGTLRGDFAVDVGRNVIHGSDSPENAEREINLWFQTQELVPWEPALTSWVYEM</sequence>
<protein>
    <recommendedName>
        <fullName evidence="1">Nucleoside diphosphate kinase</fullName>
        <shortName evidence="1">NDK</shortName>
        <shortName evidence="1">NDP kinase</shortName>
        <ecNumber evidence="1">2.7.4.6</ecNumber>
    </recommendedName>
    <alternativeName>
        <fullName evidence="1">Nucleoside-2-P kinase</fullName>
    </alternativeName>
</protein>
<comment type="function">
    <text evidence="1">Major role in the synthesis of nucleoside triphosphates other than ATP. The ATP gamma phosphate is transferred to the NDP beta phosphate via a ping-pong mechanism, using a phosphorylated active-site intermediate.</text>
</comment>
<comment type="catalytic activity">
    <reaction evidence="1">
        <text>a 2'-deoxyribonucleoside 5'-diphosphate + ATP = a 2'-deoxyribonucleoside 5'-triphosphate + ADP</text>
        <dbReference type="Rhea" id="RHEA:44640"/>
        <dbReference type="ChEBI" id="CHEBI:30616"/>
        <dbReference type="ChEBI" id="CHEBI:61560"/>
        <dbReference type="ChEBI" id="CHEBI:73316"/>
        <dbReference type="ChEBI" id="CHEBI:456216"/>
        <dbReference type="EC" id="2.7.4.6"/>
    </reaction>
</comment>
<comment type="catalytic activity">
    <reaction evidence="1">
        <text>a ribonucleoside 5'-diphosphate + ATP = a ribonucleoside 5'-triphosphate + ADP</text>
        <dbReference type="Rhea" id="RHEA:18113"/>
        <dbReference type="ChEBI" id="CHEBI:30616"/>
        <dbReference type="ChEBI" id="CHEBI:57930"/>
        <dbReference type="ChEBI" id="CHEBI:61557"/>
        <dbReference type="ChEBI" id="CHEBI:456216"/>
        <dbReference type="EC" id="2.7.4.6"/>
    </reaction>
</comment>
<comment type="cofactor">
    <cofactor evidence="1">
        <name>Mg(2+)</name>
        <dbReference type="ChEBI" id="CHEBI:18420"/>
    </cofactor>
</comment>
<comment type="subunit">
    <text evidence="1">Homotetramer.</text>
</comment>
<comment type="subcellular location">
    <subcellularLocation>
        <location evidence="1">Cytoplasm</location>
    </subcellularLocation>
</comment>
<comment type="similarity">
    <text evidence="1">Belongs to the NDK family.</text>
</comment>
<keyword id="KW-0067">ATP-binding</keyword>
<keyword id="KW-0963">Cytoplasm</keyword>
<keyword id="KW-0418">Kinase</keyword>
<keyword id="KW-0460">Magnesium</keyword>
<keyword id="KW-0479">Metal-binding</keyword>
<keyword id="KW-0546">Nucleotide metabolism</keyword>
<keyword id="KW-0547">Nucleotide-binding</keyword>
<keyword id="KW-0597">Phosphoprotein</keyword>
<keyword id="KW-1185">Reference proteome</keyword>
<keyword id="KW-0808">Transferase</keyword>
<accession>Q8DM56</accession>
<name>NDK_THEVB</name>
<proteinExistence type="inferred from homology"/>
<dbReference type="EC" id="2.7.4.6" evidence="1"/>
<dbReference type="EMBL" id="BA000039">
    <property type="protein sequence ID" value="BAC07820.1"/>
    <property type="molecule type" value="Genomic_DNA"/>
</dbReference>
<dbReference type="RefSeq" id="NP_681058.1">
    <property type="nucleotide sequence ID" value="NC_004113.1"/>
</dbReference>
<dbReference type="RefSeq" id="WP_011056122.1">
    <property type="nucleotide sequence ID" value="NC_004113.1"/>
</dbReference>
<dbReference type="SMR" id="Q8DM56"/>
<dbReference type="STRING" id="197221.gene:10746850"/>
<dbReference type="EnsemblBacteria" id="BAC07820">
    <property type="protein sequence ID" value="BAC07820"/>
    <property type="gene ID" value="BAC07820"/>
</dbReference>
<dbReference type="KEGG" id="tel:tlr0267"/>
<dbReference type="PATRIC" id="fig|197221.4.peg.280"/>
<dbReference type="eggNOG" id="COG0105">
    <property type="taxonomic scope" value="Bacteria"/>
</dbReference>
<dbReference type="Proteomes" id="UP000000440">
    <property type="component" value="Chromosome"/>
</dbReference>
<dbReference type="GO" id="GO:0005737">
    <property type="term" value="C:cytoplasm"/>
    <property type="evidence" value="ECO:0007669"/>
    <property type="project" value="UniProtKB-SubCell"/>
</dbReference>
<dbReference type="GO" id="GO:0005524">
    <property type="term" value="F:ATP binding"/>
    <property type="evidence" value="ECO:0007669"/>
    <property type="project" value="UniProtKB-UniRule"/>
</dbReference>
<dbReference type="GO" id="GO:0046872">
    <property type="term" value="F:metal ion binding"/>
    <property type="evidence" value="ECO:0007669"/>
    <property type="project" value="UniProtKB-KW"/>
</dbReference>
<dbReference type="GO" id="GO:0004550">
    <property type="term" value="F:nucleoside diphosphate kinase activity"/>
    <property type="evidence" value="ECO:0007669"/>
    <property type="project" value="UniProtKB-UniRule"/>
</dbReference>
<dbReference type="GO" id="GO:0006241">
    <property type="term" value="P:CTP biosynthetic process"/>
    <property type="evidence" value="ECO:0007669"/>
    <property type="project" value="UniProtKB-UniRule"/>
</dbReference>
<dbReference type="GO" id="GO:0006183">
    <property type="term" value="P:GTP biosynthetic process"/>
    <property type="evidence" value="ECO:0007669"/>
    <property type="project" value="UniProtKB-UniRule"/>
</dbReference>
<dbReference type="GO" id="GO:0006228">
    <property type="term" value="P:UTP biosynthetic process"/>
    <property type="evidence" value="ECO:0007669"/>
    <property type="project" value="UniProtKB-UniRule"/>
</dbReference>
<dbReference type="CDD" id="cd04413">
    <property type="entry name" value="NDPk_I"/>
    <property type="match status" value="1"/>
</dbReference>
<dbReference type="FunFam" id="3.30.70.141:FF:000002">
    <property type="entry name" value="Nucleoside diphosphate kinase"/>
    <property type="match status" value="1"/>
</dbReference>
<dbReference type="Gene3D" id="3.30.70.141">
    <property type="entry name" value="Nucleoside diphosphate kinase-like domain"/>
    <property type="match status" value="1"/>
</dbReference>
<dbReference type="HAMAP" id="MF_00451">
    <property type="entry name" value="NDP_kinase"/>
    <property type="match status" value="1"/>
</dbReference>
<dbReference type="InterPro" id="IPR034907">
    <property type="entry name" value="NDK-like_dom"/>
</dbReference>
<dbReference type="InterPro" id="IPR036850">
    <property type="entry name" value="NDK-like_dom_sf"/>
</dbReference>
<dbReference type="InterPro" id="IPR001564">
    <property type="entry name" value="Nucleoside_diP_kinase"/>
</dbReference>
<dbReference type="InterPro" id="IPR023005">
    <property type="entry name" value="Nucleoside_diP_kinase_AS"/>
</dbReference>
<dbReference type="NCBIfam" id="NF001908">
    <property type="entry name" value="PRK00668.1"/>
    <property type="match status" value="1"/>
</dbReference>
<dbReference type="PANTHER" id="PTHR11349">
    <property type="entry name" value="NUCLEOSIDE DIPHOSPHATE KINASE"/>
    <property type="match status" value="1"/>
</dbReference>
<dbReference type="Pfam" id="PF00334">
    <property type="entry name" value="NDK"/>
    <property type="match status" value="1"/>
</dbReference>
<dbReference type="PRINTS" id="PR01243">
    <property type="entry name" value="NUCDPKINASE"/>
</dbReference>
<dbReference type="SMART" id="SM00562">
    <property type="entry name" value="NDK"/>
    <property type="match status" value="1"/>
</dbReference>
<dbReference type="SUPFAM" id="SSF54919">
    <property type="entry name" value="Nucleoside diphosphate kinase, NDK"/>
    <property type="match status" value="1"/>
</dbReference>
<dbReference type="PROSITE" id="PS00469">
    <property type="entry name" value="NDPK"/>
    <property type="match status" value="1"/>
</dbReference>
<dbReference type="PROSITE" id="PS51374">
    <property type="entry name" value="NDPK_LIKE"/>
    <property type="match status" value="1"/>
</dbReference>
<reference key="1">
    <citation type="journal article" date="2002" name="DNA Res.">
        <title>Complete genome structure of the thermophilic cyanobacterium Thermosynechococcus elongatus BP-1.</title>
        <authorList>
            <person name="Nakamura Y."/>
            <person name="Kaneko T."/>
            <person name="Sato S."/>
            <person name="Ikeuchi M."/>
            <person name="Katoh H."/>
            <person name="Sasamoto S."/>
            <person name="Watanabe A."/>
            <person name="Iriguchi M."/>
            <person name="Kawashima K."/>
            <person name="Kimura T."/>
            <person name="Kishida Y."/>
            <person name="Kiyokawa C."/>
            <person name="Kohara M."/>
            <person name="Matsumoto M."/>
            <person name="Matsuno A."/>
            <person name="Nakazaki N."/>
            <person name="Shimpo S."/>
            <person name="Sugimoto M."/>
            <person name="Takeuchi C."/>
            <person name="Yamada M."/>
            <person name="Tabata S."/>
        </authorList>
    </citation>
    <scope>NUCLEOTIDE SEQUENCE [LARGE SCALE GENOMIC DNA]</scope>
    <source>
        <strain>NIES-2133 / IAM M-273 / BP-1</strain>
    </source>
</reference>
<feature type="chain" id="PRO_0000137061" description="Nucleoside diphosphate kinase">
    <location>
        <begin position="1"/>
        <end position="150"/>
    </location>
</feature>
<feature type="active site" description="Pros-phosphohistidine intermediate" evidence="1">
    <location>
        <position position="115"/>
    </location>
</feature>
<feature type="binding site" evidence="1">
    <location>
        <position position="9"/>
    </location>
    <ligand>
        <name>ATP</name>
        <dbReference type="ChEBI" id="CHEBI:30616"/>
    </ligand>
</feature>
<feature type="binding site" evidence="1">
    <location>
        <position position="57"/>
    </location>
    <ligand>
        <name>ATP</name>
        <dbReference type="ChEBI" id="CHEBI:30616"/>
    </ligand>
</feature>
<feature type="binding site" evidence="1">
    <location>
        <position position="85"/>
    </location>
    <ligand>
        <name>ATP</name>
        <dbReference type="ChEBI" id="CHEBI:30616"/>
    </ligand>
</feature>
<feature type="binding site" evidence="1">
    <location>
        <position position="91"/>
    </location>
    <ligand>
        <name>ATP</name>
        <dbReference type="ChEBI" id="CHEBI:30616"/>
    </ligand>
</feature>
<feature type="binding site" evidence="1">
    <location>
        <position position="102"/>
    </location>
    <ligand>
        <name>ATP</name>
        <dbReference type="ChEBI" id="CHEBI:30616"/>
    </ligand>
</feature>
<feature type="binding site" evidence="1">
    <location>
        <position position="112"/>
    </location>
    <ligand>
        <name>ATP</name>
        <dbReference type="ChEBI" id="CHEBI:30616"/>
    </ligand>
</feature>